<dbReference type="EC" id="1.1.1.94" evidence="1"/>
<dbReference type="EMBL" id="AP009484">
    <property type="protein sequence ID" value="BAH17832.1"/>
    <property type="molecule type" value="Genomic_DNA"/>
</dbReference>
<dbReference type="RefSeq" id="WP_012657030.1">
    <property type="nucleotide sequence ID" value="NC_011999.1"/>
</dbReference>
<dbReference type="SMR" id="B9E6L4"/>
<dbReference type="STRING" id="458233.MCCL_1125"/>
<dbReference type="KEGG" id="mcl:MCCL_1125"/>
<dbReference type="eggNOG" id="COG0240">
    <property type="taxonomic scope" value="Bacteria"/>
</dbReference>
<dbReference type="HOGENOM" id="CLU_033449_0_2_9"/>
<dbReference type="OrthoDB" id="9812273at2"/>
<dbReference type="UniPathway" id="UPA00940"/>
<dbReference type="Proteomes" id="UP000001383">
    <property type="component" value="Chromosome"/>
</dbReference>
<dbReference type="GO" id="GO:0005829">
    <property type="term" value="C:cytosol"/>
    <property type="evidence" value="ECO:0007669"/>
    <property type="project" value="TreeGrafter"/>
</dbReference>
<dbReference type="GO" id="GO:0047952">
    <property type="term" value="F:glycerol-3-phosphate dehydrogenase [NAD(P)+] activity"/>
    <property type="evidence" value="ECO:0007669"/>
    <property type="project" value="UniProtKB-UniRule"/>
</dbReference>
<dbReference type="GO" id="GO:0051287">
    <property type="term" value="F:NAD binding"/>
    <property type="evidence" value="ECO:0007669"/>
    <property type="project" value="InterPro"/>
</dbReference>
<dbReference type="GO" id="GO:0005975">
    <property type="term" value="P:carbohydrate metabolic process"/>
    <property type="evidence" value="ECO:0007669"/>
    <property type="project" value="InterPro"/>
</dbReference>
<dbReference type="GO" id="GO:0046167">
    <property type="term" value="P:glycerol-3-phosphate biosynthetic process"/>
    <property type="evidence" value="ECO:0007669"/>
    <property type="project" value="UniProtKB-UniRule"/>
</dbReference>
<dbReference type="GO" id="GO:0046168">
    <property type="term" value="P:glycerol-3-phosphate catabolic process"/>
    <property type="evidence" value="ECO:0007669"/>
    <property type="project" value="InterPro"/>
</dbReference>
<dbReference type="GO" id="GO:0006650">
    <property type="term" value="P:glycerophospholipid metabolic process"/>
    <property type="evidence" value="ECO:0007669"/>
    <property type="project" value="UniProtKB-UniRule"/>
</dbReference>
<dbReference type="GO" id="GO:0008654">
    <property type="term" value="P:phospholipid biosynthetic process"/>
    <property type="evidence" value="ECO:0007669"/>
    <property type="project" value="UniProtKB-KW"/>
</dbReference>
<dbReference type="FunFam" id="1.10.1040.10:FF:000001">
    <property type="entry name" value="Glycerol-3-phosphate dehydrogenase [NAD(P)+]"/>
    <property type="match status" value="1"/>
</dbReference>
<dbReference type="FunFam" id="3.40.50.720:FF:000019">
    <property type="entry name" value="Glycerol-3-phosphate dehydrogenase [NAD(P)+]"/>
    <property type="match status" value="1"/>
</dbReference>
<dbReference type="Gene3D" id="1.10.1040.10">
    <property type="entry name" value="N-(1-d-carboxylethyl)-l-norvaline Dehydrogenase, domain 2"/>
    <property type="match status" value="1"/>
</dbReference>
<dbReference type="Gene3D" id="3.40.50.720">
    <property type="entry name" value="NAD(P)-binding Rossmann-like Domain"/>
    <property type="match status" value="1"/>
</dbReference>
<dbReference type="HAMAP" id="MF_00394">
    <property type="entry name" value="NAD_Glyc3P_dehydrog"/>
    <property type="match status" value="1"/>
</dbReference>
<dbReference type="InterPro" id="IPR008927">
    <property type="entry name" value="6-PGluconate_DH-like_C_sf"/>
</dbReference>
<dbReference type="InterPro" id="IPR013328">
    <property type="entry name" value="6PGD_dom2"/>
</dbReference>
<dbReference type="InterPro" id="IPR006168">
    <property type="entry name" value="G3P_DH_NAD-dep"/>
</dbReference>
<dbReference type="InterPro" id="IPR006109">
    <property type="entry name" value="G3P_DH_NAD-dep_C"/>
</dbReference>
<dbReference type="InterPro" id="IPR011128">
    <property type="entry name" value="G3P_DH_NAD-dep_N"/>
</dbReference>
<dbReference type="InterPro" id="IPR036291">
    <property type="entry name" value="NAD(P)-bd_dom_sf"/>
</dbReference>
<dbReference type="NCBIfam" id="NF000940">
    <property type="entry name" value="PRK00094.1-2"/>
    <property type="match status" value="1"/>
</dbReference>
<dbReference type="NCBIfam" id="NF000941">
    <property type="entry name" value="PRK00094.1-3"/>
    <property type="match status" value="1"/>
</dbReference>
<dbReference type="NCBIfam" id="NF000942">
    <property type="entry name" value="PRK00094.1-4"/>
    <property type="match status" value="1"/>
</dbReference>
<dbReference type="PANTHER" id="PTHR11728">
    <property type="entry name" value="GLYCEROL-3-PHOSPHATE DEHYDROGENASE"/>
    <property type="match status" value="1"/>
</dbReference>
<dbReference type="PANTHER" id="PTHR11728:SF1">
    <property type="entry name" value="GLYCEROL-3-PHOSPHATE DEHYDROGENASE [NAD(+)] 2, CHLOROPLASTIC"/>
    <property type="match status" value="1"/>
</dbReference>
<dbReference type="Pfam" id="PF07479">
    <property type="entry name" value="NAD_Gly3P_dh_C"/>
    <property type="match status" value="1"/>
</dbReference>
<dbReference type="Pfam" id="PF01210">
    <property type="entry name" value="NAD_Gly3P_dh_N"/>
    <property type="match status" value="1"/>
</dbReference>
<dbReference type="PIRSF" id="PIRSF000114">
    <property type="entry name" value="Glycerol-3-P_dh"/>
    <property type="match status" value="1"/>
</dbReference>
<dbReference type="PRINTS" id="PR00077">
    <property type="entry name" value="GPDHDRGNASE"/>
</dbReference>
<dbReference type="SUPFAM" id="SSF48179">
    <property type="entry name" value="6-phosphogluconate dehydrogenase C-terminal domain-like"/>
    <property type="match status" value="1"/>
</dbReference>
<dbReference type="SUPFAM" id="SSF51735">
    <property type="entry name" value="NAD(P)-binding Rossmann-fold domains"/>
    <property type="match status" value="1"/>
</dbReference>
<dbReference type="PROSITE" id="PS00957">
    <property type="entry name" value="NAD_G3PDH"/>
    <property type="match status" value="1"/>
</dbReference>
<sequence length="332" mass="35983">MLQVSVIGTGSWGTALANVLSENQHDVLMWGKTQTTVNEINTHHTNAKYLKDTQLHHALKATSNIQQAVLHAKIIIIAVPTKAIRSVMQQINEVANEKKVFIHVSKGIEPTTFKRISEMITEEMDPEKFQGVGVLSGPSHAEELALKHPTTVAVASDDKQIRQIAQDIFMNSYFRIYTNDDLIGVEIGGALKNIIALAAGITDGLGYGDNAKAALMTRGLAEITRLGTKMGADPLTFLGLAGIGDLIVTCTSVHSRNWKCGNMLGKGASLDEALAQMGMVVEGVRTTQAANEMAQAFGVEMPITQSLYKLLFEGLDVNEGVKNLMNREKTNE</sequence>
<organism>
    <name type="scientific">Macrococcus caseolyticus (strain JCSC5402)</name>
    <name type="common">Macrococcoides caseolyticum</name>
    <dbReference type="NCBI Taxonomy" id="458233"/>
    <lineage>
        <taxon>Bacteria</taxon>
        <taxon>Bacillati</taxon>
        <taxon>Bacillota</taxon>
        <taxon>Bacilli</taxon>
        <taxon>Bacillales</taxon>
        <taxon>Staphylococcaceae</taxon>
        <taxon>Macrococcoides</taxon>
    </lineage>
</organism>
<name>GPDA_MACCJ</name>
<gene>
    <name evidence="1" type="primary">gpsA</name>
    <name type="ordered locus">MCCL_1125</name>
</gene>
<evidence type="ECO:0000255" key="1">
    <source>
        <dbReference type="HAMAP-Rule" id="MF_00394"/>
    </source>
</evidence>
<feature type="chain" id="PRO_1000190166" description="Glycerol-3-phosphate dehydrogenase [NAD(P)+]">
    <location>
        <begin position="1"/>
        <end position="332"/>
    </location>
</feature>
<feature type="active site" description="Proton acceptor" evidence="1">
    <location>
        <position position="192"/>
    </location>
</feature>
<feature type="binding site" evidence="1">
    <location>
        <position position="11"/>
    </location>
    <ligand>
        <name>NADPH</name>
        <dbReference type="ChEBI" id="CHEBI:57783"/>
    </ligand>
</feature>
<feature type="binding site" evidence="1">
    <location>
        <position position="12"/>
    </location>
    <ligand>
        <name>NADPH</name>
        <dbReference type="ChEBI" id="CHEBI:57783"/>
    </ligand>
</feature>
<feature type="binding site" evidence="1">
    <location>
        <position position="32"/>
    </location>
    <ligand>
        <name>NADPH</name>
        <dbReference type="ChEBI" id="CHEBI:57783"/>
    </ligand>
</feature>
<feature type="binding site" evidence="1">
    <location>
        <position position="106"/>
    </location>
    <ligand>
        <name>NADPH</name>
        <dbReference type="ChEBI" id="CHEBI:57783"/>
    </ligand>
</feature>
<feature type="binding site" evidence="1">
    <location>
        <position position="106"/>
    </location>
    <ligand>
        <name>sn-glycerol 3-phosphate</name>
        <dbReference type="ChEBI" id="CHEBI:57597"/>
    </ligand>
</feature>
<feature type="binding site" evidence="1">
    <location>
        <position position="137"/>
    </location>
    <ligand>
        <name>sn-glycerol 3-phosphate</name>
        <dbReference type="ChEBI" id="CHEBI:57597"/>
    </ligand>
</feature>
<feature type="binding site" evidence="1">
    <location>
        <position position="139"/>
    </location>
    <ligand>
        <name>sn-glycerol 3-phosphate</name>
        <dbReference type="ChEBI" id="CHEBI:57597"/>
    </ligand>
</feature>
<feature type="binding site" evidence="1">
    <location>
        <position position="141"/>
    </location>
    <ligand>
        <name>NADPH</name>
        <dbReference type="ChEBI" id="CHEBI:57783"/>
    </ligand>
</feature>
<feature type="binding site" evidence="1">
    <location>
        <position position="192"/>
    </location>
    <ligand>
        <name>sn-glycerol 3-phosphate</name>
        <dbReference type="ChEBI" id="CHEBI:57597"/>
    </ligand>
</feature>
<feature type="binding site" evidence="1">
    <location>
        <position position="245"/>
    </location>
    <ligand>
        <name>sn-glycerol 3-phosphate</name>
        <dbReference type="ChEBI" id="CHEBI:57597"/>
    </ligand>
</feature>
<feature type="binding site" evidence="1">
    <location>
        <position position="255"/>
    </location>
    <ligand>
        <name>sn-glycerol 3-phosphate</name>
        <dbReference type="ChEBI" id="CHEBI:57597"/>
    </ligand>
</feature>
<feature type="binding site" evidence="1">
    <location>
        <position position="256"/>
    </location>
    <ligand>
        <name>NADPH</name>
        <dbReference type="ChEBI" id="CHEBI:57783"/>
    </ligand>
</feature>
<feature type="binding site" evidence="1">
    <location>
        <position position="256"/>
    </location>
    <ligand>
        <name>sn-glycerol 3-phosphate</name>
        <dbReference type="ChEBI" id="CHEBI:57597"/>
    </ligand>
</feature>
<feature type="binding site" evidence="1">
    <location>
        <position position="257"/>
    </location>
    <ligand>
        <name>sn-glycerol 3-phosphate</name>
        <dbReference type="ChEBI" id="CHEBI:57597"/>
    </ligand>
</feature>
<feature type="binding site" evidence="1">
    <location>
        <position position="280"/>
    </location>
    <ligand>
        <name>NADPH</name>
        <dbReference type="ChEBI" id="CHEBI:57783"/>
    </ligand>
</feature>
<feature type="binding site" evidence="1">
    <location>
        <position position="282"/>
    </location>
    <ligand>
        <name>NADPH</name>
        <dbReference type="ChEBI" id="CHEBI:57783"/>
    </ligand>
</feature>
<keyword id="KW-0963">Cytoplasm</keyword>
<keyword id="KW-0444">Lipid biosynthesis</keyword>
<keyword id="KW-0443">Lipid metabolism</keyword>
<keyword id="KW-0520">NAD</keyword>
<keyword id="KW-0521">NADP</keyword>
<keyword id="KW-0547">Nucleotide-binding</keyword>
<keyword id="KW-0560">Oxidoreductase</keyword>
<keyword id="KW-0594">Phospholipid biosynthesis</keyword>
<keyword id="KW-1208">Phospholipid metabolism</keyword>
<keyword id="KW-1185">Reference proteome</keyword>
<comment type="function">
    <text evidence="1">Catalyzes the reduction of the glycolytic intermediate dihydroxyacetone phosphate (DHAP) to sn-glycerol 3-phosphate (G3P), the key precursor for phospholipid synthesis.</text>
</comment>
<comment type="catalytic activity">
    <reaction evidence="1">
        <text>sn-glycerol 3-phosphate + NAD(+) = dihydroxyacetone phosphate + NADH + H(+)</text>
        <dbReference type="Rhea" id="RHEA:11092"/>
        <dbReference type="ChEBI" id="CHEBI:15378"/>
        <dbReference type="ChEBI" id="CHEBI:57540"/>
        <dbReference type="ChEBI" id="CHEBI:57597"/>
        <dbReference type="ChEBI" id="CHEBI:57642"/>
        <dbReference type="ChEBI" id="CHEBI:57945"/>
        <dbReference type="EC" id="1.1.1.94"/>
    </reaction>
    <physiologicalReaction direction="right-to-left" evidence="1">
        <dbReference type="Rhea" id="RHEA:11094"/>
    </physiologicalReaction>
</comment>
<comment type="catalytic activity">
    <reaction evidence="1">
        <text>sn-glycerol 3-phosphate + NADP(+) = dihydroxyacetone phosphate + NADPH + H(+)</text>
        <dbReference type="Rhea" id="RHEA:11096"/>
        <dbReference type="ChEBI" id="CHEBI:15378"/>
        <dbReference type="ChEBI" id="CHEBI:57597"/>
        <dbReference type="ChEBI" id="CHEBI:57642"/>
        <dbReference type="ChEBI" id="CHEBI:57783"/>
        <dbReference type="ChEBI" id="CHEBI:58349"/>
        <dbReference type="EC" id="1.1.1.94"/>
    </reaction>
    <physiologicalReaction direction="right-to-left" evidence="1">
        <dbReference type="Rhea" id="RHEA:11098"/>
    </physiologicalReaction>
</comment>
<comment type="pathway">
    <text evidence="1">Membrane lipid metabolism; glycerophospholipid metabolism.</text>
</comment>
<comment type="subcellular location">
    <subcellularLocation>
        <location evidence="1">Cytoplasm</location>
    </subcellularLocation>
</comment>
<comment type="similarity">
    <text evidence="1">Belongs to the NAD-dependent glycerol-3-phosphate dehydrogenase family.</text>
</comment>
<protein>
    <recommendedName>
        <fullName evidence="1">Glycerol-3-phosphate dehydrogenase [NAD(P)+]</fullName>
        <ecNumber evidence="1">1.1.1.94</ecNumber>
    </recommendedName>
    <alternativeName>
        <fullName evidence="1">NAD(P)(+)-dependent glycerol-3-phosphate dehydrogenase</fullName>
    </alternativeName>
    <alternativeName>
        <fullName evidence="1">NAD(P)H-dependent dihydroxyacetone-phosphate reductase</fullName>
    </alternativeName>
</protein>
<proteinExistence type="inferred from homology"/>
<reference key="1">
    <citation type="journal article" date="2009" name="J. Bacteriol.">
        <title>Complete genome sequence of Macrococcus caseolyticus strain JCSCS5402, reflecting the ancestral genome of the human-pathogenic staphylococci.</title>
        <authorList>
            <person name="Baba T."/>
            <person name="Kuwahara-Arai K."/>
            <person name="Uchiyama I."/>
            <person name="Takeuchi F."/>
            <person name="Ito T."/>
            <person name="Hiramatsu K."/>
        </authorList>
    </citation>
    <scope>NUCLEOTIDE SEQUENCE [LARGE SCALE GENOMIC DNA]</scope>
    <source>
        <strain>JCSC5402</strain>
    </source>
</reference>
<accession>B9E6L4</accession>